<comment type="catalytic activity">
    <reaction evidence="1">
        <text>2-(N(omega)-L-arginino)succinate = fumarate + L-arginine</text>
        <dbReference type="Rhea" id="RHEA:24020"/>
        <dbReference type="ChEBI" id="CHEBI:29806"/>
        <dbReference type="ChEBI" id="CHEBI:32682"/>
        <dbReference type="ChEBI" id="CHEBI:57472"/>
        <dbReference type="EC" id="4.3.2.1"/>
    </reaction>
</comment>
<comment type="pathway">
    <text evidence="1">Amino-acid biosynthesis; L-arginine biosynthesis; L-arginine from L-ornithine and carbamoyl phosphate: step 3/3.</text>
</comment>
<comment type="subcellular location">
    <subcellularLocation>
        <location evidence="1">Cytoplasm</location>
    </subcellularLocation>
</comment>
<comment type="similarity">
    <text evidence="1">Belongs to the lyase 1 family. Argininosuccinate lyase subfamily.</text>
</comment>
<proteinExistence type="inferred from homology"/>
<name>ARLY_LEPBL</name>
<dbReference type="EC" id="4.3.2.1" evidence="1"/>
<dbReference type="EMBL" id="CP000348">
    <property type="protein sequence ID" value="ABJ78844.1"/>
    <property type="molecule type" value="Genomic_DNA"/>
</dbReference>
<dbReference type="RefSeq" id="WP_011670061.1">
    <property type="nucleotide sequence ID" value="NC_008508.1"/>
</dbReference>
<dbReference type="SMR" id="Q052A1"/>
<dbReference type="KEGG" id="lbl:LBL_1352"/>
<dbReference type="PATRIC" id="fig|355276.3.peg.1716"/>
<dbReference type="HOGENOM" id="CLU_027272_2_3_12"/>
<dbReference type="UniPathway" id="UPA00068">
    <property type="reaction ID" value="UER00114"/>
</dbReference>
<dbReference type="GO" id="GO:0005829">
    <property type="term" value="C:cytosol"/>
    <property type="evidence" value="ECO:0007669"/>
    <property type="project" value="TreeGrafter"/>
</dbReference>
<dbReference type="GO" id="GO:0004056">
    <property type="term" value="F:argininosuccinate lyase activity"/>
    <property type="evidence" value="ECO:0007669"/>
    <property type="project" value="UniProtKB-UniRule"/>
</dbReference>
<dbReference type="GO" id="GO:0042450">
    <property type="term" value="P:arginine biosynthetic process via ornithine"/>
    <property type="evidence" value="ECO:0007669"/>
    <property type="project" value="InterPro"/>
</dbReference>
<dbReference type="GO" id="GO:0006526">
    <property type="term" value="P:L-arginine biosynthetic process"/>
    <property type="evidence" value="ECO:0007669"/>
    <property type="project" value="UniProtKB-UniRule"/>
</dbReference>
<dbReference type="CDD" id="cd01359">
    <property type="entry name" value="Argininosuccinate_lyase"/>
    <property type="match status" value="1"/>
</dbReference>
<dbReference type="FunFam" id="1.10.275.10:FF:000002">
    <property type="entry name" value="Argininosuccinate lyase"/>
    <property type="match status" value="1"/>
</dbReference>
<dbReference type="FunFam" id="1.20.200.10:FF:000015">
    <property type="entry name" value="argininosuccinate lyase isoform X2"/>
    <property type="match status" value="1"/>
</dbReference>
<dbReference type="Gene3D" id="1.10.40.30">
    <property type="entry name" value="Fumarase/aspartase (C-terminal domain)"/>
    <property type="match status" value="1"/>
</dbReference>
<dbReference type="Gene3D" id="1.20.200.10">
    <property type="entry name" value="Fumarase/aspartase (Central domain)"/>
    <property type="match status" value="1"/>
</dbReference>
<dbReference type="Gene3D" id="1.10.275.10">
    <property type="entry name" value="Fumarase/aspartase (N-terminal domain)"/>
    <property type="match status" value="1"/>
</dbReference>
<dbReference type="HAMAP" id="MF_00006">
    <property type="entry name" value="Arg_succ_lyase"/>
    <property type="match status" value="1"/>
</dbReference>
<dbReference type="InterPro" id="IPR029419">
    <property type="entry name" value="Arg_succ_lyase_C"/>
</dbReference>
<dbReference type="InterPro" id="IPR009049">
    <property type="entry name" value="Argininosuccinate_lyase"/>
</dbReference>
<dbReference type="InterPro" id="IPR024083">
    <property type="entry name" value="Fumarase/histidase_N"/>
</dbReference>
<dbReference type="InterPro" id="IPR020557">
    <property type="entry name" value="Fumarate_lyase_CS"/>
</dbReference>
<dbReference type="InterPro" id="IPR000362">
    <property type="entry name" value="Fumarate_lyase_fam"/>
</dbReference>
<dbReference type="InterPro" id="IPR022761">
    <property type="entry name" value="Fumarate_lyase_N"/>
</dbReference>
<dbReference type="InterPro" id="IPR008948">
    <property type="entry name" value="L-Aspartase-like"/>
</dbReference>
<dbReference type="NCBIfam" id="TIGR00838">
    <property type="entry name" value="argH"/>
    <property type="match status" value="1"/>
</dbReference>
<dbReference type="PANTHER" id="PTHR43814">
    <property type="entry name" value="ARGININOSUCCINATE LYASE"/>
    <property type="match status" value="1"/>
</dbReference>
<dbReference type="PANTHER" id="PTHR43814:SF1">
    <property type="entry name" value="ARGININOSUCCINATE LYASE"/>
    <property type="match status" value="1"/>
</dbReference>
<dbReference type="Pfam" id="PF14698">
    <property type="entry name" value="ASL_C2"/>
    <property type="match status" value="1"/>
</dbReference>
<dbReference type="Pfam" id="PF00206">
    <property type="entry name" value="Lyase_1"/>
    <property type="match status" value="1"/>
</dbReference>
<dbReference type="PRINTS" id="PR00145">
    <property type="entry name" value="ARGSUCLYASE"/>
</dbReference>
<dbReference type="PRINTS" id="PR00149">
    <property type="entry name" value="FUMRATELYASE"/>
</dbReference>
<dbReference type="SUPFAM" id="SSF48557">
    <property type="entry name" value="L-aspartase-like"/>
    <property type="match status" value="1"/>
</dbReference>
<dbReference type="PROSITE" id="PS00163">
    <property type="entry name" value="FUMARATE_LYASES"/>
    <property type="match status" value="1"/>
</dbReference>
<reference key="1">
    <citation type="journal article" date="2006" name="Proc. Natl. Acad. Sci. U.S.A.">
        <title>Genome reduction in Leptospira borgpetersenii reflects limited transmission potential.</title>
        <authorList>
            <person name="Bulach D.M."/>
            <person name="Zuerner R.L."/>
            <person name="Wilson P."/>
            <person name="Seemann T."/>
            <person name="McGrath A."/>
            <person name="Cullen P.A."/>
            <person name="Davis J."/>
            <person name="Johnson M."/>
            <person name="Kuczek E."/>
            <person name="Alt D.P."/>
            <person name="Peterson-Burch B."/>
            <person name="Coppel R.L."/>
            <person name="Rood J.I."/>
            <person name="Davies J.K."/>
            <person name="Adler B."/>
        </authorList>
    </citation>
    <scope>NUCLEOTIDE SEQUENCE [LARGE SCALE GENOMIC DNA]</scope>
    <source>
        <strain>L550</strain>
    </source>
</reference>
<feature type="chain" id="PRO_1000000495" description="Argininosuccinate lyase">
    <location>
        <begin position="1"/>
        <end position="470"/>
    </location>
</feature>
<organism>
    <name type="scientific">Leptospira borgpetersenii serovar Hardjo-bovis (strain L550)</name>
    <dbReference type="NCBI Taxonomy" id="355276"/>
    <lineage>
        <taxon>Bacteria</taxon>
        <taxon>Pseudomonadati</taxon>
        <taxon>Spirochaetota</taxon>
        <taxon>Spirochaetia</taxon>
        <taxon>Leptospirales</taxon>
        <taxon>Leptospiraceae</taxon>
        <taxon>Leptospira</taxon>
    </lineage>
</organism>
<protein>
    <recommendedName>
        <fullName evidence="1">Argininosuccinate lyase</fullName>
        <shortName evidence="1">ASAL</shortName>
        <ecNumber evidence="1">4.3.2.1</ecNumber>
    </recommendedName>
    <alternativeName>
        <fullName evidence="1">Arginosuccinase</fullName>
    </alternativeName>
</protein>
<keyword id="KW-0028">Amino-acid biosynthesis</keyword>
<keyword id="KW-0055">Arginine biosynthesis</keyword>
<keyword id="KW-0963">Cytoplasm</keyword>
<keyword id="KW-0456">Lyase</keyword>
<evidence type="ECO:0000255" key="1">
    <source>
        <dbReference type="HAMAP-Rule" id="MF_00006"/>
    </source>
</evidence>
<gene>
    <name evidence="1" type="primary">argH</name>
    <name type="ordered locus">LBL_1352</name>
</gene>
<sequence>MTGKEKKLWGGRFQEKPSSILERIGESVSFDHKLYKEDIQGSIAHARMLKQIGILSGDELSKIETSLLQIKTELEEGKLEFKSELEDIHMHIESRLTELIGETGKKLHTARSRNDQVTQDVRLYILGRGKEILKSIVSLRFSLYEKAKRSVDVIIPGYTHLQVAQPIRASQYLLSWFWALERDQEFFRFALKASDELALGGGAMAGVNYATDREFLKKELGLSKVSPNSMDGVSSRDHILEFLFACTQLMIHASRICEDIILYSSQEFGILKLSDSLTTGSSIMPQKKNPDIAELIRGKAGRVIGNLNHLLVMLKGLPSTYNRDLQEDKLALFDSVETVEISLEGIREMIEDWVWVPERAESSLKNGFATATDLADFLVYEKKVPFRTAHELVGTLVRVCVEQKRTLFDLPEPDRIAVSEHFVGKEYENAVSLSLSADKKISYGGTSKKRQEEQLKIALESLKQTETLFL</sequence>
<accession>Q052A1</accession>